<comment type="subcellular location">
    <subcellularLocation>
        <location evidence="2">Cell membrane</location>
        <topology evidence="2">Lipid-anchor</topology>
        <topology evidence="2">GPI-anchor</topology>
    </subcellularLocation>
</comment>
<evidence type="ECO:0000255" key="1"/>
<evidence type="ECO:0000305" key="2"/>
<reference key="1">
    <citation type="submission" date="2005-11" db="EMBL/GenBank/DDBJ databases">
        <authorList>
            <consortium name="NIH - Mammalian Gene Collection (MGC) project"/>
        </authorList>
    </citation>
    <scope>NUCLEOTIDE SEQUENCE [LARGE SCALE MRNA]</scope>
    <source>
        <strain>Crossbred X Angus</strain>
        <tissue>Liver</tissue>
    </source>
</reference>
<accession>Q32LD3</accession>
<proteinExistence type="evidence at transcript level"/>
<name>LYPD4_BOVIN</name>
<dbReference type="EMBL" id="BC109635">
    <property type="protein sequence ID" value="AAI09636.1"/>
    <property type="molecule type" value="mRNA"/>
</dbReference>
<dbReference type="RefSeq" id="NP_001069910.1">
    <property type="nucleotide sequence ID" value="NM_001076442.1"/>
</dbReference>
<dbReference type="SMR" id="Q32LD3"/>
<dbReference type="FunCoup" id="Q32LD3">
    <property type="interactions" value="1"/>
</dbReference>
<dbReference type="STRING" id="9913.ENSBTAP00000026978"/>
<dbReference type="GlyCosmos" id="Q32LD3">
    <property type="glycosylation" value="1 site, No reported glycans"/>
</dbReference>
<dbReference type="GlyGen" id="Q32LD3">
    <property type="glycosylation" value="1 site"/>
</dbReference>
<dbReference type="PaxDb" id="9913-ENSBTAP00000026978"/>
<dbReference type="GeneID" id="617066"/>
<dbReference type="KEGG" id="bta:617066"/>
<dbReference type="CTD" id="147719"/>
<dbReference type="eggNOG" id="ENOG502RNFS">
    <property type="taxonomic scope" value="Eukaryota"/>
</dbReference>
<dbReference type="HOGENOM" id="CLU_108759_0_0_1"/>
<dbReference type="InParanoid" id="Q32LD3"/>
<dbReference type="OrthoDB" id="9522487at2759"/>
<dbReference type="TreeFam" id="TF337286"/>
<dbReference type="Proteomes" id="UP000009136">
    <property type="component" value="Unplaced"/>
</dbReference>
<dbReference type="GO" id="GO:0044853">
    <property type="term" value="C:plasma membrane raft"/>
    <property type="evidence" value="ECO:0000318"/>
    <property type="project" value="GO_Central"/>
</dbReference>
<dbReference type="GO" id="GO:0098552">
    <property type="term" value="C:side of membrane"/>
    <property type="evidence" value="ECO:0007669"/>
    <property type="project" value="UniProtKB-KW"/>
</dbReference>
<dbReference type="CDD" id="cd23621">
    <property type="entry name" value="TFP_LU_ECD_LYPD4_rpt1"/>
    <property type="match status" value="1"/>
</dbReference>
<dbReference type="CDD" id="cd23635">
    <property type="entry name" value="TFP_LU_ECD_LYPD4_rpt2"/>
    <property type="match status" value="1"/>
</dbReference>
<dbReference type="Gene3D" id="2.10.60.10">
    <property type="entry name" value="CD59"/>
    <property type="match status" value="1"/>
</dbReference>
<dbReference type="InterPro" id="IPR051899">
    <property type="entry name" value="Fert-Immune_med_protein"/>
</dbReference>
<dbReference type="InterPro" id="IPR016054">
    <property type="entry name" value="LY6_UPA_recep-like"/>
</dbReference>
<dbReference type="InterPro" id="IPR045860">
    <property type="entry name" value="Snake_toxin-like_sf"/>
</dbReference>
<dbReference type="PANTHER" id="PTHR16529">
    <property type="entry name" value="CD177 ANTIGEN"/>
    <property type="match status" value="1"/>
</dbReference>
<dbReference type="PANTHER" id="PTHR16529:SF8">
    <property type="entry name" value="CD177 ANTIGEN"/>
    <property type="match status" value="1"/>
</dbReference>
<dbReference type="Pfam" id="PF00021">
    <property type="entry name" value="UPAR_LY6"/>
    <property type="match status" value="1"/>
</dbReference>
<dbReference type="SUPFAM" id="SSF57302">
    <property type="entry name" value="Snake toxin-like"/>
    <property type="match status" value="1"/>
</dbReference>
<sequence length="246" mass="26872">MGPQHLSPMQLLCLLGAISSLPWAEALLCYEATSSLFRAVGLHRWQWFLLRSMVCKLNEGCEETLVFIEAGTRKGILGFKGCSPASSYPPQVSYLVSPPGLSIASYSRVCRTYLCNNLTNMNAILHLKARTPKTLKSSSHSCPTCVGEHSKSCLPNFVSSESCPRDATKCYSSTVKFQAGFLNTTFLLMGCAREHTSVFAHFHHIGSIRVTEVINIVEKALFTGAGTPCRSPSWGILLGLLFAFKG</sequence>
<gene>
    <name type="primary">LYPD4</name>
</gene>
<organism>
    <name type="scientific">Bos taurus</name>
    <name type="common">Bovine</name>
    <dbReference type="NCBI Taxonomy" id="9913"/>
    <lineage>
        <taxon>Eukaryota</taxon>
        <taxon>Metazoa</taxon>
        <taxon>Chordata</taxon>
        <taxon>Craniata</taxon>
        <taxon>Vertebrata</taxon>
        <taxon>Euteleostomi</taxon>
        <taxon>Mammalia</taxon>
        <taxon>Eutheria</taxon>
        <taxon>Laurasiatheria</taxon>
        <taxon>Artiodactyla</taxon>
        <taxon>Ruminantia</taxon>
        <taxon>Pecora</taxon>
        <taxon>Bovidae</taxon>
        <taxon>Bovinae</taxon>
        <taxon>Bos</taxon>
    </lineage>
</organism>
<protein>
    <recommendedName>
        <fullName>Ly6/PLAUR domain-containing protein 4</fullName>
    </recommendedName>
</protein>
<feature type="signal peptide" evidence="1">
    <location>
        <begin position="1"/>
        <end position="26"/>
    </location>
</feature>
<feature type="chain" id="PRO_0000226757" description="Ly6/PLAUR domain-containing protein 4">
    <location>
        <begin position="27"/>
        <end position="225"/>
    </location>
</feature>
<feature type="propeptide" id="PRO_0000226758" description="Removed in mature form" evidence="1">
    <location>
        <begin position="226"/>
        <end position="246"/>
    </location>
</feature>
<feature type="domain" description="UPAR/Ly6">
    <location>
        <begin position="142"/>
        <end position="223"/>
    </location>
</feature>
<feature type="lipid moiety-binding region" description="GPI-anchor amidated alanine" evidence="1">
    <location>
        <position position="225"/>
    </location>
</feature>
<feature type="glycosylation site" description="N-linked (GlcNAc...) asparagine" evidence="1">
    <location>
        <position position="117"/>
    </location>
</feature>
<keyword id="KW-1003">Cell membrane</keyword>
<keyword id="KW-0325">Glycoprotein</keyword>
<keyword id="KW-0336">GPI-anchor</keyword>
<keyword id="KW-0449">Lipoprotein</keyword>
<keyword id="KW-0472">Membrane</keyword>
<keyword id="KW-1185">Reference proteome</keyword>
<keyword id="KW-0677">Repeat</keyword>
<keyword id="KW-0732">Signal</keyword>